<proteinExistence type="inferred from homology"/>
<accession>B5F7H6</accession>
<keyword id="KW-0119">Carbohydrate metabolism</keyword>
<keyword id="KW-0146">Chitin degradation</keyword>
<keyword id="KW-0963">Cytoplasm</keyword>
<keyword id="KW-0378">Hydrolase</keyword>
<keyword id="KW-0460">Magnesium</keyword>
<keyword id="KW-0479">Metal-binding</keyword>
<keyword id="KW-0624">Polysaccharide degradation</keyword>
<reference key="1">
    <citation type="journal article" date="2011" name="J. Bacteriol.">
        <title>Comparative genomics of 28 Salmonella enterica isolates: evidence for CRISPR-mediated adaptive sublineage evolution.</title>
        <authorList>
            <person name="Fricke W.F."/>
            <person name="Mammel M.K."/>
            <person name="McDermott P.F."/>
            <person name="Tartera C."/>
            <person name="White D.G."/>
            <person name="Leclerc J.E."/>
            <person name="Ravel J."/>
            <person name="Cebula T.A."/>
        </authorList>
    </citation>
    <scope>NUCLEOTIDE SEQUENCE [LARGE SCALE GENOMIC DNA]</scope>
    <source>
        <strain>SL483</strain>
    </source>
</reference>
<feature type="chain" id="PRO_1000139830" description="Chitooligosaccharide deacetylase">
    <location>
        <begin position="1"/>
        <end position="252"/>
    </location>
</feature>
<feature type="binding site" evidence="1">
    <location>
        <position position="61"/>
    </location>
    <ligand>
        <name>Mg(2+)</name>
        <dbReference type="ChEBI" id="CHEBI:18420"/>
    </ligand>
</feature>
<feature type="binding site" evidence="1">
    <location>
        <position position="125"/>
    </location>
    <ligand>
        <name>Mg(2+)</name>
        <dbReference type="ChEBI" id="CHEBI:18420"/>
    </ligand>
</feature>
<gene>
    <name evidence="1" type="primary">chbG</name>
    <name type="ordered locus">SeAg_B1854</name>
</gene>
<name>CHBG_SALA4</name>
<comment type="function">
    <text evidence="1">Involved in the degradation of chitin. ChbG is essential for growth on the acetylated chitooligosaccharides chitobiose and chitotriose but is dispensable for growth on cellobiose and chitosan dimer, the deacetylated form of chitobiose. Deacetylation of chitobiose-6-P and chitotriose-6-P is necessary for both the activation of the chb promoter by the regulatory protein ChbR and the hydrolysis of phosphorylated beta-glucosides by the phospho-beta-glucosidase ChbF. Catalyzes the removal of only one acetyl group from chitobiose-6-P to yield monoacetylchitobiose-6-P, the inducer of ChbR and the substrate of ChbF.</text>
</comment>
<comment type="catalytic activity">
    <reaction evidence="1">
        <text>N,N'-diacetylchitobiose + H2O = N-acetyl-beta-D-glucosaminyl-(1-&gt;4)-D-glucosamine + acetate</text>
        <dbReference type="Rhea" id="RHEA:27469"/>
        <dbReference type="ChEBI" id="CHEBI:15377"/>
        <dbReference type="ChEBI" id="CHEBI:28681"/>
        <dbReference type="ChEBI" id="CHEBI:30089"/>
        <dbReference type="ChEBI" id="CHEBI:59910"/>
        <dbReference type="EC" id="3.5.1.105"/>
    </reaction>
</comment>
<comment type="catalytic activity">
    <reaction evidence="1">
        <text>diacetylchitobiose-6'-phosphate + H2O = N'-monoacetylchitobiose-6'-phosphate + acetate</text>
        <dbReference type="Rhea" id="RHEA:35083"/>
        <dbReference type="ChEBI" id="CHEBI:15377"/>
        <dbReference type="ChEBI" id="CHEBI:30089"/>
        <dbReference type="ChEBI" id="CHEBI:64883"/>
        <dbReference type="ChEBI" id="CHEBI:71315"/>
    </reaction>
</comment>
<comment type="cofactor">
    <cofactor evidence="1">
        <name>Mg(2+)</name>
        <dbReference type="ChEBI" id="CHEBI:18420"/>
    </cofactor>
</comment>
<comment type="pathway">
    <text evidence="1">Glycan degradation; chitin degradation.</text>
</comment>
<comment type="subunit">
    <text evidence="1">Homodimer.</text>
</comment>
<comment type="subcellular location">
    <subcellularLocation>
        <location evidence="1">Cytoplasm</location>
    </subcellularLocation>
</comment>
<comment type="similarity">
    <text evidence="1">Belongs to the YdjC deacetylase family. ChbG subfamily.</text>
</comment>
<dbReference type="EC" id="3.5.1.105" evidence="1"/>
<dbReference type="EMBL" id="CP001138">
    <property type="protein sequence ID" value="ACH52372.1"/>
    <property type="molecule type" value="Genomic_DNA"/>
</dbReference>
<dbReference type="RefSeq" id="WP_000442730.1">
    <property type="nucleotide sequence ID" value="NC_011149.1"/>
</dbReference>
<dbReference type="SMR" id="B5F7H6"/>
<dbReference type="KEGG" id="sea:SeAg_B1854"/>
<dbReference type="HOGENOM" id="CLU_064244_4_1_6"/>
<dbReference type="UniPathway" id="UPA00349"/>
<dbReference type="Proteomes" id="UP000008819">
    <property type="component" value="Chromosome"/>
</dbReference>
<dbReference type="GO" id="GO:0005737">
    <property type="term" value="C:cytoplasm"/>
    <property type="evidence" value="ECO:0007669"/>
    <property type="project" value="UniProtKB-SubCell"/>
</dbReference>
<dbReference type="GO" id="GO:0036311">
    <property type="term" value="F:chitin disaccharide deacetylase activity"/>
    <property type="evidence" value="ECO:0007669"/>
    <property type="project" value="UniProtKB-UniRule"/>
</dbReference>
<dbReference type="GO" id="GO:0019213">
    <property type="term" value="F:deacetylase activity"/>
    <property type="evidence" value="ECO:0007669"/>
    <property type="project" value="TreeGrafter"/>
</dbReference>
<dbReference type="GO" id="GO:0046872">
    <property type="term" value="F:metal ion binding"/>
    <property type="evidence" value="ECO:0007669"/>
    <property type="project" value="UniProtKB-KW"/>
</dbReference>
<dbReference type="GO" id="GO:0006032">
    <property type="term" value="P:chitin catabolic process"/>
    <property type="evidence" value="ECO:0007669"/>
    <property type="project" value="UniProtKB-UniPathway"/>
</dbReference>
<dbReference type="GO" id="GO:0052777">
    <property type="term" value="P:diacetylchitobiose catabolic process"/>
    <property type="evidence" value="ECO:0007669"/>
    <property type="project" value="UniProtKB-UniRule"/>
</dbReference>
<dbReference type="GO" id="GO:0000272">
    <property type="term" value="P:polysaccharide catabolic process"/>
    <property type="evidence" value="ECO:0007669"/>
    <property type="project" value="UniProtKB-UniRule"/>
</dbReference>
<dbReference type="CDD" id="cd10803">
    <property type="entry name" value="YdjC_EF3048_like"/>
    <property type="match status" value="1"/>
</dbReference>
<dbReference type="FunFam" id="3.20.20.370:FF:000001">
    <property type="entry name" value="Chitooligosaccharide deacetylase"/>
    <property type="match status" value="1"/>
</dbReference>
<dbReference type="Gene3D" id="3.20.20.370">
    <property type="entry name" value="Glycoside hydrolase/deacetylase"/>
    <property type="match status" value="1"/>
</dbReference>
<dbReference type="HAMAP" id="MF_01246">
    <property type="entry name" value="COD"/>
    <property type="match status" value="1"/>
</dbReference>
<dbReference type="InterPro" id="IPR022948">
    <property type="entry name" value="COD_ChbG_bac"/>
</dbReference>
<dbReference type="InterPro" id="IPR011330">
    <property type="entry name" value="Glyco_hydro/deAcase_b/a-brl"/>
</dbReference>
<dbReference type="InterPro" id="IPR006879">
    <property type="entry name" value="YdjC-like"/>
</dbReference>
<dbReference type="NCBIfam" id="NF002559">
    <property type="entry name" value="PRK02134.1"/>
    <property type="match status" value="1"/>
</dbReference>
<dbReference type="PANTHER" id="PTHR31609:SF1">
    <property type="entry name" value="CARBOHYDRATE DEACETYLASE"/>
    <property type="match status" value="1"/>
</dbReference>
<dbReference type="PANTHER" id="PTHR31609">
    <property type="entry name" value="YDJC DEACETYLASE FAMILY MEMBER"/>
    <property type="match status" value="1"/>
</dbReference>
<dbReference type="Pfam" id="PF04794">
    <property type="entry name" value="YdjC"/>
    <property type="match status" value="1"/>
</dbReference>
<dbReference type="SUPFAM" id="SSF88713">
    <property type="entry name" value="Glycoside hydrolase/deacetylase"/>
    <property type="match status" value="1"/>
</dbReference>
<sequence>MERVLIVNADDFGLSKGQNYGIVEAYRNGVVTSTTALVNGEAIDHAAQLSRELPALGVGMHFVLTLGKPVSEMPGLTRDGLLGKWIWQMAEEDTLPLDEIAHELACQYQRFIDVFGREPTHLDSHHHVHMFPQIFPIVARFAAQRGIALRIDRQTVLNADDLPSDLRSTQGFSSEFYGEEITEACFLRILDASAHRGEASLEVMCHPAFVDNIIRQSAYCYPRLTELEVLTSASLKAAIAERGYRPGSFLDI</sequence>
<evidence type="ECO:0000255" key="1">
    <source>
        <dbReference type="HAMAP-Rule" id="MF_01246"/>
    </source>
</evidence>
<organism>
    <name type="scientific">Salmonella agona (strain SL483)</name>
    <dbReference type="NCBI Taxonomy" id="454166"/>
    <lineage>
        <taxon>Bacteria</taxon>
        <taxon>Pseudomonadati</taxon>
        <taxon>Pseudomonadota</taxon>
        <taxon>Gammaproteobacteria</taxon>
        <taxon>Enterobacterales</taxon>
        <taxon>Enterobacteriaceae</taxon>
        <taxon>Salmonella</taxon>
    </lineage>
</organism>
<protein>
    <recommendedName>
        <fullName evidence="1">Chitooligosaccharide deacetylase</fullName>
        <shortName evidence="1">COD</shortName>
        <ecNumber evidence="1">3.5.1.105</ecNumber>
    </recommendedName>
    <alternativeName>
        <fullName evidence="1">Chitin disaccharide deacetylase</fullName>
    </alternativeName>
    <alternativeName>
        <fullName evidence="1">Chitobiose deacetylase</fullName>
    </alternativeName>
    <alternativeName>
        <fullName evidence="1">Chitobiose-6P deacetylase</fullName>
    </alternativeName>
    <alternativeName>
        <fullName evidence="1">Chitotriose deacetylase</fullName>
    </alternativeName>
    <alternativeName>
        <fullName evidence="1">Chitotriose-6P deacetylase</fullName>
    </alternativeName>
</protein>